<dbReference type="EMBL" id="CP000738">
    <property type="protein sequence ID" value="ABR59717.1"/>
    <property type="molecule type" value="Genomic_DNA"/>
</dbReference>
<dbReference type="RefSeq" id="WP_011975056.1">
    <property type="nucleotide sequence ID" value="NC_009636.1"/>
</dbReference>
<dbReference type="RefSeq" id="YP_001326552.1">
    <property type="nucleotide sequence ID" value="NC_009636.1"/>
</dbReference>
<dbReference type="SMR" id="A6U7T7"/>
<dbReference type="STRING" id="366394.Smed_0862"/>
<dbReference type="GeneID" id="61612304"/>
<dbReference type="KEGG" id="smd:Smed_0862"/>
<dbReference type="PATRIC" id="fig|366394.8.peg.3976"/>
<dbReference type="eggNOG" id="COG0102">
    <property type="taxonomic scope" value="Bacteria"/>
</dbReference>
<dbReference type="HOGENOM" id="CLU_082184_2_0_5"/>
<dbReference type="OrthoDB" id="9801330at2"/>
<dbReference type="Proteomes" id="UP000001108">
    <property type="component" value="Chromosome"/>
</dbReference>
<dbReference type="GO" id="GO:0022625">
    <property type="term" value="C:cytosolic large ribosomal subunit"/>
    <property type="evidence" value="ECO:0007669"/>
    <property type="project" value="TreeGrafter"/>
</dbReference>
<dbReference type="GO" id="GO:0003729">
    <property type="term" value="F:mRNA binding"/>
    <property type="evidence" value="ECO:0007669"/>
    <property type="project" value="TreeGrafter"/>
</dbReference>
<dbReference type="GO" id="GO:0003735">
    <property type="term" value="F:structural constituent of ribosome"/>
    <property type="evidence" value="ECO:0007669"/>
    <property type="project" value="InterPro"/>
</dbReference>
<dbReference type="GO" id="GO:0017148">
    <property type="term" value="P:negative regulation of translation"/>
    <property type="evidence" value="ECO:0007669"/>
    <property type="project" value="TreeGrafter"/>
</dbReference>
<dbReference type="GO" id="GO:0006412">
    <property type="term" value="P:translation"/>
    <property type="evidence" value="ECO:0007669"/>
    <property type="project" value="UniProtKB-UniRule"/>
</dbReference>
<dbReference type="CDD" id="cd00392">
    <property type="entry name" value="Ribosomal_L13"/>
    <property type="match status" value="1"/>
</dbReference>
<dbReference type="FunFam" id="3.90.1180.10:FF:000001">
    <property type="entry name" value="50S ribosomal protein L13"/>
    <property type="match status" value="1"/>
</dbReference>
<dbReference type="Gene3D" id="3.90.1180.10">
    <property type="entry name" value="Ribosomal protein L13"/>
    <property type="match status" value="1"/>
</dbReference>
<dbReference type="HAMAP" id="MF_01366">
    <property type="entry name" value="Ribosomal_uL13"/>
    <property type="match status" value="1"/>
</dbReference>
<dbReference type="InterPro" id="IPR005822">
    <property type="entry name" value="Ribosomal_uL13"/>
</dbReference>
<dbReference type="InterPro" id="IPR005823">
    <property type="entry name" value="Ribosomal_uL13_bac-type"/>
</dbReference>
<dbReference type="InterPro" id="IPR036899">
    <property type="entry name" value="Ribosomal_uL13_sf"/>
</dbReference>
<dbReference type="NCBIfam" id="TIGR01066">
    <property type="entry name" value="rplM_bact"/>
    <property type="match status" value="1"/>
</dbReference>
<dbReference type="PANTHER" id="PTHR11545:SF2">
    <property type="entry name" value="LARGE RIBOSOMAL SUBUNIT PROTEIN UL13M"/>
    <property type="match status" value="1"/>
</dbReference>
<dbReference type="PANTHER" id="PTHR11545">
    <property type="entry name" value="RIBOSOMAL PROTEIN L13"/>
    <property type="match status" value="1"/>
</dbReference>
<dbReference type="Pfam" id="PF00572">
    <property type="entry name" value="Ribosomal_L13"/>
    <property type="match status" value="1"/>
</dbReference>
<dbReference type="PIRSF" id="PIRSF002181">
    <property type="entry name" value="Ribosomal_L13"/>
    <property type="match status" value="1"/>
</dbReference>
<dbReference type="SUPFAM" id="SSF52161">
    <property type="entry name" value="Ribosomal protein L13"/>
    <property type="match status" value="1"/>
</dbReference>
<comment type="function">
    <text evidence="1">This protein is one of the early assembly proteins of the 50S ribosomal subunit, although it is not seen to bind rRNA by itself. It is important during the early stages of 50S assembly.</text>
</comment>
<comment type="subunit">
    <text evidence="1">Part of the 50S ribosomal subunit.</text>
</comment>
<comment type="similarity">
    <text evidence="1">Belongs to the universal ribosomal protein uL13 family.</text>
</comment>
<gene>
    <name evidence="1" type="primary">rplM</name>
    <name type="ordered locus">Smed_0862</name>
</gene>
<proteinExistence type="inferred from homology"/>
<organism>
    <name type="scientific">Sinorhizobium medicae (strain WSM419)</name>
    <name type="common">Ensifer medicae</name>
    <dbReference type="NCBI Taxonomy" id="366394"/>
    <lineage>
        <taxon>Bacteria</taxon>
        <taxon>Pseudomonadati</taxon>
        <taxon>Pseudomonadota</taxon>
        <taxon>Alphaproteobacteria</taxon>
        <taxon>Hyphomicrobiales</taxon>
        <taxon>Rhizobiaceae</taxon>
        <taxon>Sinorhizobium/Ensifer group</taxon>
        <taxon>Sinorhizobium</taxon>
    </lineage>
</organism>
<evidence type="ECO:0000255" key="1">
    <source>
        <dbReference type="HAMAP-Rule" id="MF_01366"/>
    </source>
</evidence>
<evidence type="ECO:0000305" key="2"/>
<reference key="1">
    <citation type="submission" date="2007-06" db="EMBL/GenBank/DDBJ databases">
        <title>Complete sequence of Sinorhizobium medicae WSM419 chromosome.</title>
        <authorList>
            <consortium name="US DOE Joint Genome Institute"/>
            <person name="Copeland A."/>
            <person name="Lucas S."/>
            <person name="Lapidus A."/>
            <person name="Barry K."/>
            <person name="Glavina del Rio T."/>
            <person name="Dalin E."/>
            <person name="Tice H."/>
            <person name="Pitluck S."/>
            <person name="Chain P."/>
            <person name="Malfatti S."/>
            <person name="Shin M."/>
            <person name="Vergez L."/>
            <person name="Schmutz J."/>
            <person name="Larimer F."/>
            <person name="Land M."/>
            <person name="Hauser L."/>
            <person name="Kyrpides N."/>
            <person name="Mikhailova N."/>
            <person name="Reeve W.G."/>
            <person name="Richardson P."/>
        </authorList>
    </citation>
    <scope>NUCLEOTIDE SEQUENCE [LARGE SCALE GENOMIC DNA]</scope>
    <source>
        <strain>WSM419</strain>
    </source>
</reference>
<keyword id="KW-0687">Ribonucleoprotein</keyword>
<keyword id="KW-0689">Ribosomal protein</keyword>
<protein>
    <recommendedName>
        <fullName evidence="1">Large ribosomal subunit protein uL13</fullName>
    </recommendedName>
    <alternativeName>
        <fullName evidence="2">50S ribosomal protein L13</fullName>
    </alternativeName>
</protein>
<feature type="chain" id="PRO_1000055473" description="Large ribosomal subunit protein uL13">
    <location>
        <begin position="1"/>
        <end position="154"/>
    </location>
</feature>
<name>RL13_SINMW</name>
<accession>A6U7T7</accession>
<sequence length="154" mass="17397">MATFVQKPAEVEKKWILIDAEGLVVGRLASLIANRLRGKHKATYTPHVDDGDNVIVINAEKAVLTGKKYTDKKYYWHTGYPGGIKERTARQIIEGRFPERVIEKAVERMVPRGPLGRRQMKNLRVYAGSNHPHEAQQPTVLDVAKLNNKNTRSA</sequence>